<protein>
    <recommendedName>
        <fullName evidence="1">2,3-bisphosphoglycerate-dependent phosphoglycerate mutase</fullName>
        <shortName evidence="1">BPG-dependent PGAM</shortName>
        <shortName evidence="1">PGAM</shortName>
        <shortName evidence="1">Phosphoglyceromutase</shortName>
        <shortName evidence="1">dPGM</shortName>
        <ecNumber evidence="1">5.4.2.11</ecNumber>
    </recommendedName>
</protein>
<sequence>MAVTKLVLVRHGESQWNKENRFTGWYDVDLSEKGVSEAKAAGKLLKEEGFSFDFAYTSVLKRAIHTLWNVLDELDQAWLPVEKSWKLNERHYGALQGLNKAETAEKYGDEQVKQWRRGFAVTPPELTKDDERYPGHDPRYAKLSEKELPLTESLALTIDRVIPYWNDTILPRMKSGERVIIAAHGNSLRALVKYLDNMSEDEILELNIPTGVPLVYEFDENFKPIKHYYLGNADEIAAKAAAVANQGKAK</sequence>
<comment type="function">
    <text evidence="1">Catalyzes the interconversion of 2-phosphoglycerate and 3-phosphoglycerate.</text>
</comment>
<comment type="catalytic activity">
    <reaction evidence="1">
        <text>(2R)-2-phosphoglycerate = (2R)-3-phosphoglycerate</text>
        <dbReference type="Rhea" id="RHEA:15901"/>
        <dbReference type="ChEBI" id="CHEBI:58272"/>
        <dbReference type="ChEBI" id="CHEBI:58289"/>
        <dbReference type="EC" id="5.4.2.11"/>
    </reaction>
</comment>
<comment type="pathway">
    <text evidence="1">Carbohydrate degradation; glycolysis; pyruvate from D-glyceraldehyde 3-phosphate: step 3/5.</text>
</comment>
<comment type="subunit">
    <text evidence="1">Homodimer.</text>
</comment>
<comment type="similarity">
    <text evidence="1">Belongs to the phosphoglycerate mutase family. BPG-dependent PGAM subfamily.</text>
</comment>
<keyword id="KW-0312">Gluconeogenesis</keyword>
<keyword id="KW-0324">Glycolysis</keyword>
<keyword id="KW-0413">Isomerase</keyword>
<evidence type="ECO:0000255" key="1">
    <source>
        <dbReference type="HAMAP-Rule" id="MF_01039"/>
    </source>
</evidence>
<name>GPMA_SALSV</name>
<feature type="chain" id="PRO_1000135977" description="2,3-bisphosphoglycerate-dependent phosphoglycerate mutase">
    <location>
        <begin position="1"/>
        <end position="250"/>
    </location>
</feature>
<feature type="active site" description="Tele-phosphohistidine intermediate" evidence="1">
    <location>
        <position position="11"/>
    </location>
</feature>
<feature type="active site" description="Proton donor/acceptor" evidence="1">
    <location>
        <position position="89"/>
    </location>
</feature>
<feature type="binding site" evidence="1">
    <location>
        <begin position="10"/>
        <end position="17"/>
    </location>
    <ligand>
        <name>substrate</name>
    </ligand>
</feature>
<feature type="binding site" evidence="1">
    <location>
        <begin position="23"/>
        <end position="24"/>
    </location>
    <ligand>
        <name>substrate</name>
    </ligand>
</feature>
<feature type="binding site" evidence="1">
    <location>
        <position position="62"/>
    </location>
    <ligand>
        <name>substrate</name>
    </ligand>
</feature>
<feature type="binding site" evidence="1">
    <location>
        <begin position="89"/>
        <end position="92"/>
    </location>
    <ligand>
        <name>substrate</name>
    </ligand>
</feature>
<feature type="binding site" evidence="1">
    <location>
        <position position="100"/>
    </location>
    <ligand>
        <name>substrate</name>
    </ligand>
</feature>
<feature type="binding site" evidence="1">
    <location>
        <begin position="116"/>
        <end position="117"/>
    </location>
    <ligand>
        <name>substrate</name>
    </ligand>
</feature>
<feature type="binding site" evidence="1">
    <location>
        <begin position="185"/>
        <end position="186"/>
    </location>
    <ligand>
        <name>substrate</name>
    </ligand>
</feature>
<feature type="site" description="Transition state stabilizer" evidence="1">
    <location>
        <position position="184"/>
    </location>
</feature>
<dbReference type="EC" id="5.4.2.11" evidence="1"/>
<dbReference type="EMBL" id="CP001127">
    <property type="protein sequence ID" value="ACF89470.1"/>
    <property type="molecule type" value="Genomic_DNA"/>
</dbReference>
<dbReference type="RefSeq" id="WP_000301554.1">
    <property type="nucleotide sequence ID" value="NC_011094.1"/>
</dbReference>
<dbReference type="SMR" id="B4TQR7"/>
<dbReference type="KEGG" id="sew:SeSA_A0922"/>
<dbReference type="HOGENOM" id="CLU_033323_1_1_6"/>
<dbReference type="UniPathway" id="UPA00109">
    <property type="reaction ID" value="UER00186"/>
</dbReference>
<dbReference type="Proteomes" id="UP000001865">
    <property type="component" value="Chromosome"/>
</dbReference>
<dbReference type="GO" id="GO:0004619">
    <property type="term" value="F:phosphoglycerate mutase activity"/>
    <property type="evidence" value="ECO:0007669"/>
    <property type="project" value="UniProtKB-EC"/>
</dbReference>
<dbReference type="GO" id="GO:0006094">
    <property type="term" value="P:gluconeogenesis"/>
    <property type="evidence" value="ECO:0007669"/>
    <property type="project" value="UniProtKB-UniRule"/>
</dbReference>
<dbReference type="GO" id="GO:0006096">
    <property type="term" value="P:glycolytic process"/>
    <property type="evidence" value="ECO:0007669"/>
    <property type="project" value="UniProtKB-UniRule"/>
</dbReference>
<dbReference type="CDD" id="cd07067">
    <property type="entry name" value="HP_PGM_like"/>
    <property type="match status" value="1"/>
</dbReference>
<dbReference type="FunFam" id="3.40.50.1240:FF:000003">
    <property type="entry name" value="2,3-bisphosphoglycerate-dependent phosphoglycerate mutase"/>
    <property type="match status" value="1"/>
</dbReference>
<dbReference type="Gene3D" id="3.40.50.1240">
    <property type="entry name" value="Phosphoglycerate mutase-like"/>
    <property type="match status" value="1"/>
</dbReference>
<dbReference type="HAMAP" id="MF_01039">
    <property type="entry name" value="PGAM_GpmA"/>
    <property type="match status" value="1"/>
</dbReference>
<dbReference type="InterPro" id="IPR013078">
    <property type="entry name" value="His_Pase_superF_clade-1"/>
</dbReference>
<dbReference type="InterPro" id="IPR029033">
    <property type="entry name" value="His_PPase_superfam"/>
</dbReference>
<dbReference type="InterPro" id="IPR001345">
    <property type="entry name" value="PG/BPGM_mutase_AS"/>
</dbReference>
<dbReference type="InterPro" id="IPR005952">
    <property type="entry name" value="Phosphogly_mut1"/>
</dbReference>
<dbReference type="NCBIfam" id="TIGR01258">
    <property type="entry name" value="pgm_1"/>
    <property type="match status" value="1"/>
</dbReference>
<dbReference type="NCBIfam" id="NF010713">
    <property type="entry name" value="PRK14115.1"/>
    <property type="match status" value="1"/>
</dbReference>
<dbReference type="PANTHER" id="PTHR11931">
    <property type="entry name" value="PHOSPHOGLYCERATE MUTASE"/>
    <property type="match status" value="1"/>
</dbReference>
<dbReference type="Pfam" id="PF00300">
    <property type="entry name" value="His_Phos_1"/>
    <property type="match status" value="1"/>
</dbReference>
<dbReference type="PIRSF" id="PIRSF000709">
    <property type="entry name" value="6PFK_2-Ptase"/>
    <property type="match status" value="1"/>
</dbReference>
<dbReference type="SMART" id="SM00855">
    <property type="entry name" value="PGAM"/>
    <property type="match status" value="1"/>
</dbReference>
<dbReference type="SUPFAM" id="SSF53254">
    <property type="entry name" value="Phosphoglycerate mutase-like"/>
    <property type="match status" value="1"/>
</dbReference>
<dbReference type="PROSITE" id="PS00175">
    <property type="entry name" value="PG_MUTASE"/>
    <property type="match status" value="1"/>
</dbReference>
<proteinExistence type="inferred from homology"/>
<accession>B4TQR7</accession>
<reference key="1">
    <citation type="journal article" date="2011" name="J. Bacteriol.">
        <title>Comparative genomics of 28 Salmonella enterica isolates: evidence for CRISPR-mediated adaptive sublineage evolution.</title>
        <authorList>
            <person name="Fricke W.F."/>
            <person name="Mammel M.K."/>
            <person name="McDermott P.F."/>
            <person name="Tartera C."/>
            <person name="White D.G."/>
            <person name="Leclerc J.E."/>
            <person name="Ravel J."/>
            <person name="Cebula T.A."/>
        </authorList>
    </citation>
    <scope>NUCLEOTIDE SEQUENCE [LARGE SCALE GENOMIC DNA]</scope>
    <source>
        <strain>CVM19633</strain>
    </source>
</reference>
<gene>
    <name evidence="1" type="primary">gpmA</name>
    <name type="ordered locus">SeSA_A0922</name>
</gene>
<organism>
    <name type="scientific">Salmonella schwarzengrund (strain CVM19633)</name>
    <dbReference type="NCBI Taxonomy" id="439843"/>
    <lineage>
        <taxon>Bacteria</taxon>
        <taxon>Pseudomonadati</taxon>
        <taxon>Pseudomonadota</taxon>
        <taxon>Gammaproteobacteria</taxon>
        <taxon>Enterobacterales</taxon>
        <taxon>Enterobacteriaceae</taxon>
        <taxon>Salmonella</taxon>
    </lineage>
</organism>